<name>Y1074_GEOSL</name>
<gene>
    <name type="ordered locus">GSU1074</name>
</gene>
<proteinExistence type="inferred from homology"/>
<comment type="subcellular location">
    <subcellularLocation>
        <location evidence="1">Cytoplasm</location>
    </subcellularLocation>
</comment>
<comment type="similarity">
    <text evidence="1">Belongs to the TACO1 family.</text>
</comment>
<dbReference type="EMBL" id="AE017180">
    <property type="protein sequence ID" value="AAR34400.1"/>
    <property type="molecule type" value="Genomic_DNA"/>
</dbReference>
<dbReference type="RefSeq" id="NP_952127.1">
    <property type="nucleotide sequence ID" value="NC_002939.5"/>
</dbReference>
<dbReference type="RefSeq" id="WP_010941735.1">
    <property type="nucleotide sequence ID" value="NC_002939.5"/>
</dbReference>
<dbReference type="SMR" id="P62036"/>
<dbReference type="FunCoup" id="P62036">
    <property type="interactions" value="534"/>
</dbReference>
<dbReference type="STRING" id="243231.GSU1074"/>
<dbReference type="EnsemblBacteria" id="AAR34400">
    <property type="protein sequence ID" value="AAR34400"/>
    <property type="gene ID" value="GSU1074"/>
</dbReference>
<dbReference type="KEGG" id="gsu:GSU1074"/>
<dbReference type="PATRIC" id="fig|243231.5.peg.1072"/>
<dbReference type="eggNOG" id="COG0217">
    <property type="taxonomic scope" value="Bacteria"/>
</dbReference>
<dbReference type="HOGENOM" id="CLU_062974_2_2_7"/>
<dbReference type="InParanoid" id="P62036"/>
<dbReference type="OrthoDB" id="9781053at2"/>
<dbReference type="Proteomes" id="UP000000577">
    <property type="component" value="Chromosome"/>
</dbReference>
<dbReference type="GO" id="GO:0005829">
    <property type="term" value="C:cytosol"/>
    <property type="evidence" value="ECO:0000318"/>
    <property type="project" value="GO_Central"/>
</dbReference>
<dbReference type="GO" id="GO:0003677">
    <property type="term" value="F:DNA binding"/>
    <property type="evidence" value="ECO:0007669"/>
    <property type="project" value="UniProtKB-UniRule"/>
</dbReference>
<dbReference type="GO" id="GO:0006355">
    <property type="term" value="P:regulation of DNA-templated transcription"/>
    <property type="evidence" value="ECO:0007669"/>
    <property type="project" value="UniProtKB-UniRule"/>
</dbReference>
<dbReference type="FunFam" id="1.10.10.200:FF:000001">
    <property type="entry name" value="Probable transcriptional regulatory protein YebC"/>
    <property type="match status" value="1"/>
</dbReference>
<dbReference type="FunFam" id="3.30.70.980:FF:000002">
    <property type="entry name" value="Probable transcriptional regulatory protein YebC"/>
    <property type="match status" value="1"/>
</dbReference>
<dbReference type="Gene3D" id="1.10.10.200">
    <property type="match status" value="1"/>
</dbReference>
<dbReference type="Gene3D" id="3.30.70.980">
    <property type="match status" value="2"/>
</dbReference>
<dbReference type="HAMAP" id="MF_00693">
    <property type="entry name" value="Transcrip_reg_TACO1"/>
    <property type="match status" value="1"/>
</dbReference>
<dbReference type="InterPro" id="IPR017856">
    <property type="entry name" value="Integrase-like_N"/>
</dbReference>
<dbReference type="InterPro" id="IPR048300">
    <property type="entry name" value="TACO1_YebC-like_2nd/3rd_dom"/>
</dbReference>
<dbReference type="InterPro" id="IPR049083">
    <property type="entry name" value="TACO1_YebC_N"/>
</dbReference>
<dbReference type="InterPro" id="IPR002876">
    <property type="entry name" value="Transcrip_reg_TACO1-like"/>
</dbReference>
<dbReference type="InterPro" id="IPR026564">
    <property type="entry name" value="Transcrip_reg_TACO1-like_dom3"/>
</dbReference>
<dbReference type="InterPro" id="IPR029072">
    <property type="entry name" value="YebC-like"/>
</dbReference>
<dbReference type="NCBIfam" id="NF001030">
    <property type="entry name" value="PRK00110.1"/>
    <property type="match status" value="1"/>
</dbReference>
<dbReference type="NCBIfam" id="NF009044">
    <property type="entry name" value="PRK12378.1"/>
    <property type="match status" value="1"/>
</dbReference>
<dbReference type="NCBIfam" id="TIGR01033">
    <property type="entry name" value="YebC/PmpR family DNA-binding transcriptional regulator"/>
    <property type="match status" value="1"/>
</dbReference>
<dbReference type="PANTHER" id="PTHR12532:SF6">
    <property type="entry name" value="TRANSCRIPTIONAL REGULATORY PROTEIN YEBC-RELATED"/>
    <property type="match status" value="1"/>
</dbReference>
<dbReference type="PANTHER" id="PTHR12532">
    <property type="entry name" value="TRANSLATIONAL ACTIVATOR OF CYTOCHROME C OXIDASE 1"/>
    <property type="match status" value="1"/>
</dbReference>
<dbReference type="Pfam" id="PF20772">
    <property type="entry name" value="TACO1_YebC_N"/>
    <property type="match status" value="1"/>
</dbReference>
<dbReference type="Pfam" id="PF01709">
    <property type="entry name" value="Transcrip_reg"/>
    <property type="match status" value="1"/>
</dbReference>
<dbReference type="SUPFAM" id="SSF75625">
    <property type="entry name" value="YebC-like"/>
    <property type="match status" value="1"/>
</dbReference>
<organism>
    <name type="scientific">Geobacter sulfurreducens (strain ATCC 51573 / DSM 12127 / PCA)</name>
    <dbReference type="NCBI Taxonomy" id="243231"/>
    <lineage>
        <taxon>Bacteria</taxon>
        <taxon>Pseudomonadati</taxon>
        <taxon>Thermodesulfobacteriota</taxon>
        <taxon>Desulfuromonadia</taxon>
        <taxon>Geobacterales</taxon>
        <taxon>Geobacteraceae</taxon>
        <taxon>Geobacter</taxon>
    </lineage>
</organism>
<protein>
    <recommendedName>
        <fullName evidence="1">Probable transcriptional regulatory protein GSU1074</fullName>
    </recommendedName>
</protein>
<feature type="chain" id="PRO_0000175814" description="Probable transcriptional regulatory protein GSU1074">
    <location>
        <begin position="1"/>
        <end position="247"/>
    </location>
</feature>
<keyword id="KW-0963">Cytoplasm</keyword>
<keyword id="KW-0238">DNA-binding</keyword>
<keyword id="KW-1185">Reference proteome</keyword>
<keyword id="KW-0804">Transcription</keyword>
<keyword id="KW-0805">Transcription regulation</keyword>
<accession>P62036</accession>
<evidence type="ECO:0000255" key="1">
    <source>
        <dbReference type="HAMAP-Rule" id="MF_00693"/>
    </source>
</evidence>
<reference key="1">
    <citation type="journal article" date="2003" name="Science">
        <title>Genome of Geobacter sulfurreducens: metal reduction in subsurface environments.</title>
        <authorList>
            <person name="Methe B.A."/>
            <person name="Nelson K.E."/>
            <person name="Eisen J.A."/>
            <person name="Paulsen I.T."/>
            <person name="Nelson W.C."/>
            <person name="Heidelberg J.F."/>
            <person name="Wu D."/>
            <person name="Wu M."/>
            <person name="Ward N.L."/>
            <person name="Beanan M.J."/>
            <person name="Dodson R.J."/>
            <person name="Madupu R."/>
            <person name="Brinkac L.M."/>
            <person name="Daugherty S.C."/>
            <person name="DeBoy R.T."/>
            <person name="Durkin A.S."/>
            <person name="Gwinn M.L."/>
            <person name="Kolonay J.F."/>
            <person name="Sullivan S.A."/>
            <person name="Haft D.H."/>
            <person name="Selengut J."/>
            <person name="Davidsen T.M."/>
            <person name="Zafar N."/>
            <person name="White O."/>
            <person name="Tran B."/>
            <person name="Romero C."/>
            <person name="Forberger H.A."/>
            <person name="Weidman J.F."/>
            <person name="Khouri H.M."/>
            <person name="Feldblyum T.V."/>
            <person name="Utterback T.R."/>
            <person name="Van Aken S.E."/>
            <person name="Lovley D.R."/>
            <person name="Fraser C.M."/>
        </authorList>
    </citation>
    <scope>NUCLEOTIDE SEQUENCE [LARGE SCALE GENOMIC DNA]</scope>
    <source>
        <strain>ATCC 51573 / DSM 12127 / PCA</strain>
    </source>
</reference>
<sequence>MSGHNKWSTIRHKKGAADAKRGKVFTKLIKEITVAAKIGGGDPNGNPRLRAAVDKAKAENMPKDNIERAIKKGTGELEGVSYEEIIYEGYGPGGVAVLVECMTDNRNRTVGEVRSTFTKCNGNMGEAGCVSWMFDKKGLIVLSKDVDFEKLFETALEAGADDVADEEEQYEVLTDPAAFIDVREALEKAGFPFESAEITMIPQTMVKLDGKNAENMLKLMDRLEDNDDVQNVYANFDISTEEMEKLM</sequence>